<reference key="1">
    <citation type="journal article" date="2000" name="DNA Res.">
        <title>Complete genome structure of the nitrogen-fixing symbiotic bacterium Mesorhizobium loti.</title>
        <authorList>
            <person name="Kaneko T."/>
            <person name="Nakamura Y."/>
            <person name="Sato S."/>
            <person name="Asamizu E."/>
            <person name="Kato T."/>
            <person name="Sasamoto S."/>
            <person name="Watanabe A."/>
            <person name="Idesawa K."/>
            <person name="Ishikawa A."/>
            <person name="Kawashima K."/>
            <person name="Kimura T."/>
            <person name="Kishida Y."/>
            <person name="Kiyokawa C."/>
            <person name="Kohara M."/>
            <person name="Matsumoto M."/>
            <person name="Matsuno A."/>
            <person name="Mochizuki Y."/>
            <person name="Nakayama S."/>
            <person name="Nakazaki N."/>
            <person name="Shimpo S."/>
            <person name="Sugimoto M."/>
            <person name="Takeuchi C."/>
            <person name="Yamada M."/>
            <person name="Tabata S."/>
        </authorList>
    </citation>
    <scope>NUCLEOTIDE SEQUENCE [LARGE SCALE GENOMIC DNA]</scope>
    <source>
        <strain>LMG 29417 / CECT 9101 / MAFF 303099</strain>
    </source>
</reference>
<proteinExistence type="inferred from homology"/>
<name>ERYH_RHILO</name>
<evidence type="ECO:0000250" key="1">
    <source>
        <dbReference type="UniProtKB" id="P9WG43"/>
    </source>
</evidence>
<evidence type="ECO:0000250" key="2">
    <source>
        <dbReference type="UniProtKB" id="Q2YIQ6"/>
    </source>
</evidence>
<evidence type="ECO:0000305" key="3"/>
<dbReference type="EC" id="5.3.1.33" evidence="2"/>
<dbReference type="EMBL" id="BA000012">
    <property type="protein sequence ID" value="BAB53417.1"/>
    <property type="molecule type" value="Genomic_DNA"/>
</dbReference>
<dbReference type="SMR" id="Q986N6"/>
<dbReference type="KEGG" id="mlo:mlr7275"/>
<dbReference type="eggNOG" id="COG0149">
    <property type="taxonomic scope" value="Bacteria"/>
</dbReference>
<dbReference type="HOGENOM" id="CLU_024251_2_3_5"/>
<dbReference type="UniPathway" id="UPA01066"/>
<dbReference type="Proteomes" id="UP000000552">
    <property type="component" value="Chromosome"/>
</dbReference>
<dbReference type="GO" id="GO:0005829">
    <property type="term" value="C:cytosol"/>
    <property type="evidence" value="ECO:0007669"/>
    <property type="project" value="TreeGrafter"/>
</dbReference>
<dbReference type="GO" id="GO:0004807">
    <property type="term" value="F:triose-phosphate isomerase activity"/>
    <property type="evidence" value="ECO:0007669"/>
    <property type="project" value="InterPro"/>
</dbReference>
<dbReference type="GO" id="GO:0006094">
    <property type="term" value="P:gluconeogenesis"/>
    <property type="evidence" value="ECO:0007669"/>
    <property type="project" value="UniProtKB-KW"/>
</dbReference>
<dbReference type="GO" id="GO:0046166">
    <property type="term" value="P:glyceraldehyde-3-phosphate biosynthetic process"/>
    <property type="evidence" value="ECO:0007669"/>
    <property type="project" value="TreeGrafter"/>
</dbReference>
<dbReference type="GO" id="GO:0019563">
    <property type="term" value="P:glycerol catabolic process"/>
    <property type="evidence" value="ECO:0007669"/>
    <property type="project" value="TreeGrafter"/>
</dbReference>
<dbReference type="GO" id="GO:0006096">
    <property type="term" value="P:glycolytic process"/>
    <property type="evidence" value="ECO:0007669"/>
    <property type="project" value="UniProtKB-KW"/>
</dbReference>
<dbReference type="GO" id="GO:0006098">
    <property type="term" value="P:pentose-phosphate shunt"/>
    <property type="evidence" value="ECO:0007669"/>
    <property type="project" value="UniProtKB-KW"/>
</dbReference>
<dbReference type="CDD" id="cd00311">
    <property type="entry name" value="TIM"/>
    <property type="match status" value="1"/>
</dbReference>
<dbReference type="Gene3D" id="3.20.20.70">
    <property type="entry name" value="Aldolase class I"/>
    <property type="match status" value="1"/>
</dbReference>
<dbReference type="InterPro" id="IPR013785">
    <property type="entry name" value="Aldolase_TIM"/>
</dbReference>
<dbReference type="InterPro" id="IPR035990">
    <property type="entry name" value="TIM_sf"/>
</dbReference>
<dbReference type="InterPro" id="IPR000652">
    <property type="entry name" value="Triosephosphate_isomerase"/>
</dbReference>
<dbReference type="InterPro" id="IPR020861">
    <property type="entry name" value="Triosephosphate_isomerase_AS"/>
</dbReference>
<dbReference type="NCBIfam" id="NF000722">
    <property type="entry name" value="PRK00042.2-1"/>
    <property type="match status" value="1"/>
</dbReference>
<dbReference type="NCBIfam" id="TIGR00419">
    <property type="entry name" value="tim"/>
    <property type="match status" value="1"/>
</dbReference>
<dbReference type="PANTHER" id="PTHR21139">
    <property type="entry name" value="TRIOSEPHOSPHATE ISOMERASE"/>
    <property type="match status" value="1"/>
</dbReference>
<dbReference type="PANTHER" id="PTHR21139:SF42">
    <property type="entry name" value="TRIOSEPHOSPHATE ISOMERASE"/>
    <property type="match status" value="1"/>
</dbReference>
<dbReference type="Pfam" id="PF00121">
    <property type="entry name" value="TIM"/>
    <property type="match status" value="1"/>
</dbReference>
<dbReference type="SUPFAM" id="SSF51351">
    <property type="entry name" value="Triosephosphate isomerase (TIM)"/>
    <property type="match status" value="1"/>
</dbReference>
<dbReference type="PROSITE" id="PS00171">
    <property type="entry name" value="TIM_1"/>
    <property type="match status" value="1"/>
</dbReference>
<dbReference type="PROSITE" id="PS51440">
    <property type="entry name" value="TIM_2"/>
    <property type="match status" value="1"/>
</dbReference>
<sequence>MRVVYWVGTSWKMNKTLAEALDFAERLAGFIPGFDDRIQPFVIPPFTAVREVKRALSSTRIKVGAQNMHWADAGAWTGEISPPMLRDCGLDLVELGHSERREHFGETDRTVGLKTAAAVKHGMIPLICVGETLAERESGQADAVLSAQVEGALQFLEGEAKTAKILFAYEPVWAIGDKGIPASADYADKQQALIKTVAGALLPSVPPVLYGGSVNPGNAAELVGQPNIDGLFIGRSAWQADGYIDILGRASAAI</sequence>
<accession>Q986N6</accession>
<feature type="chain" id="PRO_0000090275" description="L-erythrulose-1-phosphate isomerase">
    <location>
        <begin position="1"/>
        <end position="254"/>
    </location>
</feature>
<feature type="active site" description="Electrophile" evidence="1">
    <location>
        <position position="97"/>
    </location>
</feature>
<feature type="active site" description="Proton acceptor" evidence="1">
    <location>
        <position position="170"/>
    </location>
</feature>
<feature type="binding site" evidence="1">
    <location>
        <position position="176"/>
    </location>
    <ligand>
        <name>substrate</name>
    </ligand>
</feature>
<feature type="binding site" evidence="1">
    <location>
        <position position="213"/>
    </location>
    <ligand>
        <name>substrate</name>
    </ligand>
</feature>
<keyword id="KW-0963">Cytoplasm</keyword>
<keyword id="KW-0312">Gluconeogenesis</keyword>
<keyword id="KW-0324">Glycolysis</keyword>
<keyword id="KW-0413">Isomerase</keyword>
<keyword id="KW-0570">Pentose shunt</keyword>
<organism>
    <name type="scientific">Mesorhizobium japonicum (strain LMG 29417 / CECT 9101 / MAFF 303099)</name>
    <name type="common">Mesorhizobium loti (strain MAFF 303099)</name>
    <dbReference type="NCBI Taxonomy" id="266835"/>
    <lineage>
        <taxon>Bacteria</taxon>
        <taxon>Pseudomonadati</taxon>
        <taxon>Pseudomonadota</taxon>
        <taxon>Alphaproteobacteria</taxon>
        <taxon>Hyphomicrobiales</taxon>
        <taxon>Phyllobacteriaceae</taxon>
        <taxon>Mesorhizobium</taxon>
    </lineage>
</organism>
<gene>
    <name evidence="2" type="primary">eryH</name>
    <name type="ordered locus">mlr7275</name>
</gene>
<comment type="function">
    <text evidence="2">Catalyzes the isomerization of D-erythrulose-4P to L-erythrulose-1P.</text>
</comment>
<comment type="catalytic activity">
    <reaction evidence="2">
        <text>L-erythrulose 1-phosphate = D-erythrulose 4-phosphate</text>
        <dbReference type="Rhea" id="RHEA:49588"/>
        <dbReference type="ChEBI" id="CHEBI:58002"/>
        <dbReference type="ChEBI" id="CHEBI:90796"/>
        <dbReference type="EC" id="5.3.1.33"/>
    </reaction>
</comment>
<comment type="pathway">
    <text evidence="2">Carbohydrate metabolism; erythritol degradation.</text>
</comment>
<comment type="subunit">
    <text evidence="1">Homodimer.</text>
</comment>
<comment type="subcellular location">
    <subcellularLocation>
        <location evidence="1">Cytoplasm</location>
    </subcellularLocation>
</comment>
<comment type="similarity">
    <text evidence="3">Belongs to the triosephosphate isomerase family.</text>
</comment>
<protein>
    <recommendedName>
        <fullName evidence="2">L-erythrulose-1-phosphate isomerase</fullName>
        <ecNumber evidence="2">5.3.1.33</ecNumber>
    </recommendedName>
    <alternativeName>
        <fullName evidence="2">D-3-tetrulose-4-phosphate isomerase</fullName>
    </alternativeName>
</protein>